<sequence>MVMQRTFVMIKPDGVKRGLIGEIISRFEKRGLKIVSLKMVKMSRDIAEKLYDEHKGKSFFEELVNYVTSGPVVCMVIEGDDVVQVIRRMIGNTDPKEAPPGTIRGDYALSKSENVIHASDSIEKAQREMSLFFDKSDL</sequence>
<comment type="function">
    <text evidence="1">Major role in the synthesis of nucleoside triphosphates other than ATP. The ATP gamma phosphate is transferred to the NDP beta phosphate via a ping-pong mechanism, using a phosphorylated active-site intermediate.</text>
</comment>
<comment type="catalytic activity">
    <reaction evidence="1">
        <text>a 2'-deoxyribonucleoside 5'-diphosphate + ATP = a 2'-deoxyribonucleoside 5'-triphosphate + ADP</text>
        <dbReference type="Rhea" id="RHEA:44640"/>
        <dbReference type="ChEBI" id="CHEBI:30616"/>
        <dbReference type="ChEBI" id="CHEBI:61560"/>
        <dbReference type="ChEBI" id="CHEBI:73316"/>
        <dbReference type="ChEBI" id="CHEBI:456216"/>
        <dbReference type="EC" id="2.7.4.6"/>
    </reaction>
</comment>
<comment type="catalytic activity">
    <reaction evidence="1">
        <text>a ribonucleoside 5'-diphosphate + ATP = a ribonucleoside 5'-triphosphate + ADP</text>
        <dbReference type="Rhea" id="RHEA:18113"/>
        <dbReference type="ChEBI" id="CHEBI:30616"/>
        <dbReference type="ChEBI" id="CHEBI:57930"/>
        <dbReference type="ChEBI" id="CHEBI:61557"/>
        <dbReference type="ChEBI" id="CHEBI:456216"/>
        <dbReference type="EC" id="2.7.4.6"/>
    </reaction>
</comment>
<comment type="cofactor">
    <cofactor evidence="1">
        <name>Mg(2+)</name>
        <dbReference type="ChEBI" id="CHEBI:18420"/>
    </cofactor>
</comment>
<comment type="subcellular location">
    <subcellularLocation>
        <location evidence="1">Cytoplasm</location>
    </subcellularLocation>
</comment>
<comment type="similarity">
    <text evidence="1">Belongs to the NDK family.</text>
</comment>
<gene>
    <name evidence="1" type="primary">ndk</name>
    <name type="ordered locus">YN1551_0936</name>
</gene>
<dbReference type="EC" id="2.7.4.6" evidence="1"/>
<dbReference type="EMBL" id="CP001404">
    <property type="protein sequence ID" value="ACP48045.1"/>
    <property type="molecule type" value="Genomic_DNA"/>
</dbReference>
<dbReference type="RefSeq" id="WP_012711881.1">
    <property type="nucleotide sequence ID" value="NC_012623.1"/>
</dbReference>
<dbReference type="SMR" id="C3NFS7"/>
<dbReference type="GeneID" id="84062220"/>
<dbReference type="KEGG" id="sin:YN1551_0936"/>
<dbReference type="HOGENOM" id="CLU_060216_6_3_2"/>
<dbReference type="Proteomes" id="UP000006818">
    <property type="component" value="Chromosome"/>
</dbReference>
<dbReference type="GO" id="GO:0005737">
    <property type="term" value="C:cytoplasm"/>
    <property type="evidence" value="ECO:0007669"/>
    <property type="project" value="UniProtKB-SubCell"/>
</dbReference>
<dbReference type="GO" id="GO:0005524">
    <property type="term" value="F:ATP binding"/>
    <property type="evidence" value="ECO:0007669"/>
    <property type="project" value="UniProtKB-UniRule"/>
</dbReference>
<dbReference type="GO" id="GO:0046872">
    <property type="term" value="F:metal ion binding"/>
    <property type="evidence" value="ECO:0007669"/>
    <property type="project" value="UniProtKB-KW"/>
</dbReference>
<dbReference type="GO" id="GO:0004550">
    <property type="term" value="F:nucleoside diphosphate kinase activity"/>
    <property type="evidence" value="ECO:0007669"/>
    <property type="project" value="UniProtKB-UniRule"/>
</dbReference>
<dbReference type="GO" id="GO:0006241">
    <property type="term" value="P:CTP biosynthetic process"/>
    <property type="evidence" value="ECO:0007669"/>
    <property type="project" value="UniProtKB-UniRule"/>
</dbReference>
<dbReference type="GO" id="GO:0006183">
    <property type="term" value="P:GTP biosynthetic process"/>
    <property type="evidence" value="ECO:0007669"/>
    <property type="project" value="UniProtKB-UniRule"/>
</dbReference>
<dbReference type="GO" id="GO:0006228">
    <property type="term" value="P:UTP biosynthetic process"/>
    <property type="evidence" value="ECO:0007669"/>
    <property type="project" value="UniProtKB-UniRule"/>
</dbReference>
<dbReference type="CDD" id="cd04413">
    <property type="entry name" value="NDPk_I"/>
    <property type="match status" value="1"/>
</dbReference>
<dbReference type="FunFam" id="3.30.70.141:FF:000003">
    <property type="entry name" value="Nucleoside diphosphate kinase"/>
    <property type="match status" value="1"/>
</dbReference>
<dbReference type="Gene3D" id="3.30.70.141">
    <property type="entry name" value="Nucleoside diphosphate kinase-like domain"/>
    <property type="match status" value="1"/>
</dbReference>
<dbReference type="HAMAP" id="MF_00451">
    <property type="entry name" value="NDP_kinase"/>
    <property type="match status" value="1"/>
</dbReference>
<dbReference type="InterPro" id="IPR034907">
    <property type="entry name" value="NDK-like_dom"/>
</dbReference>
<dbReference type="InterPro" id="IPR036850">
    <property type="entry name" value="NDK-like_dom_sf"/>
</dbReference>
<dbReference type="InterPro" id="IPR001564">
    <property type="entry name" value="Nucleoside_diP_kinase"/>
</dbReference>
<dbReference type="InterPro" id="IPR023005">
    <property type="entry name" value="Nucleoside_diP_kinase_AS"/>
</dbReference>
<dbReference type="NCBIfam" id="NF001908">
    <property type="entry name" value="PRK00668.1"/>
    <property type="match status" value="1"/>
</dbReference>
<dbReference type="PANTHER" id="PTHR11349">
    <property type="entry name" value="NUCLEOSIDE DIPHOSPHATE KINASE"/>
    <property type="match status" value="1"/>
</dbReference>
<dbReference type="Pfam" id="PF00334">
    <property type="entry name" value="NDK"/>
    <property type="match status" value="1"/>
</dbReference>
<dbReference type="PRINTS" id="PR01243">
    <property type="entry name" value="NUCDPKINASE"/>
</dbReference>
<dbReference type="SMART" id="SM00562">
    <property type="entry name" value="NDK"/>
    <property type="match status" value="1"/>
</dbReference>
<dbReference type="SUPFAM" id="SSF54919">
    <property type="entry name" value="Nucleoside diphosphate kinase, NDK"/>
    <property type="match status" value="1"/>
</dbReference>
<dbReference type="PROSITE" id="PS00469">
    <property type="entry name" value="NDPK"/>
    <property type="match status" value="1"/>
</dbReference>
<dbReference type="PROSITE" id="PS51374">
    <property type="entry name" value="NDPK_LIKE"/>
    <property type="match status" value="1"/>
</dbReference>
<organism>
    <name type="scientific">Saccharolobus islandicus (strain Y.N.15.51 / Yellowstone #2)</name>
    <name type="common">Sulfolobus islandicus</name>
    <dbReference type="NCBI Taxonomy" id="419942"/>
    <lineage>
        <taxon>Archaea</taxon>
        <taxon>Thermoproteota</taxon>
        <taxon>Thermoprotei</taxon>
        <taxon>Sulfolobales</taxon>
        <taxon>Sulfolobaceae</taxon>
        <taxon>Saccharolobus</taxon>
    </lineage>
</organism>
<accession>C3NFS7</accession>
<protein>
    <recommendedName>
        <fullName evidence="1">Nucleoside diphosphate kinase</fullName>
        <shortName evidence="1">NDK</shortName>
        <shortName evidence="1">NDP kinase</shortName>
        <ecNumber evidence="1">2.7.4.6</ecNumber>
    </recommendedName>
    <alternativeName>
        <fullName evidence="1">Nucleoside-2-P kinase</fullName>
    </alternativeName>
</protein>
<name>NDK_SACI1</name>
<keyword id="KW-0067">ATP-binding</keyword>
<keyword id="KW-0963">Cytoplasm</keyword>
<keyword id="KW-0418">Kinase</keyword>
<keyword id="KW-0460">Magnesium</keyword>
<keyword id="KW-0479">Metal-binding</keyword>
<keyword id="KW-0546">Nucleotide metabolism</keyword>
<keyword id="KW-0547">Nucleotide-binding</keyword>
<keyword id="KW-0597">Phosphoprotein</keyword>
<keyword id="KW-0808">Transferase</keyword>
<reference key="1">
    <citation type="journal article" date="2009" name="Proc. Natl. Acad. Sci. U.S.A.">
        <title>Biogeography of the Sulfolobus islandicus pan-genome.</title>
        <authorList>
            <person name="Reno M.L."/>
            <person name="Held N.L."/>
            <person name="Fields C.J."/>
            <person name="Burke P.V."/>
            <person name="Whitaker R.J."/>
        </authorList>
    </citation>
    <scope>NUCLEOTIDE SEQUENCE [LARGE SCALE GENOMIC DNA]</scope>
    <source>
        <strain>Y.N.15.51 / Yellowstone #2</strain>
    </source>
</reference>
<evidence type="ECO:0000255" key="1">
    <source>
        <dbReference type="HAMAP-Rule" id="MF_00451"/>
    </source>
</evidence>
<feature type="chain" id="PRO_1000206227" description="Nucleoside diphosphate kinase">
    <location>
        <begin position="1"/>
        <end position="138"/>
    </location>
</feature>
<feature type="active site" description="Pros-phosphohistidine intermediate" evidence="1">
    <location>
        <position position="117"/>
    </location>
</feature>
<feature type="binding site" evidence="1">
    <location>
        <position position="11"/>
    </location>
    <ligand>
        <name>ATP</name>
        <dbReference type="ChEBI" id="CHEBI:30616"/>
    </ligand>
</feature>
<feature type="binding site" evidence="1">
    <location>
        <position position="59"/>
    </location>
    <ligand>
        <name>ATP</name>
        <dbReference type="ChEBI" id="CHEBI:30616"/>
    </ligand>
</feature>
<feature type="binding site" evidence="1">
    <location>
        <position position="87"/>
    </location>
    <ligand>
        <name>ATP</name>
        <dbReference type="ChEBI" id="CHEBI:30616"/>
    </ligand>
</feature>
<feature type="binding site" evidence="1">
    <location>
        <position position="93"/>
    </location>
    <ligand>
        <name>ATP</name>
        <dbReference type="ChEBI" id="CHEBI:30616"/>
    </ligand>
</feature>
<feature type="binding site" evidence="1">
    <location>
        <position position="104"/>
    </location>
    <ligand>
        <name>ATP</name>
        <dbReference type="ChEBI" id="CHEBI:30616"/>
    </ligand>
</feature>
<feature type="binding site" evidence="1">
    <location>
        <position position="114"/>
    </location>
    <ligand>
        <name>ATP</name>
        <dbReference type="ChEBI" id="CHEBI:30616"/>
    </ligand>
</feature>
<proteinExistence type="inferred from homology"/>